<reference key="1">
    <citation type="journal article" date="2005" name="BMC Genomics">
        <title>Bacterial genome adaptation to niches: divergence of the potential virulence genes in three Burkholderia species of different survival strategies.</title>
        <authorList>
            <person name="Kim H.S."/>
            <person name="Schell M.A."/>
            <person name="Yu Y."/>
            <person name="Ulrich R.L."/>
            <person name="Sarria S.H."/>
            <person name="Nierman W.C."/>
            <person name="DeShazer D."/>
        </authorList>
    </citation>
    <scope>NUCLEOTIDE SEQUENCE [LARGE SCALE GENOMIC DNA]</scope>
    <source>
        <strain>ATCC 700388 / DSM 13276 / CCUG 48851 / CIP 106301 / E264</strain>
    </source>
</reference>
<comment type="function">
    <text evidence="1">Required for insertion of 4Fe-4S clusters.</text>
</comment>
<comment type="cofactor">
    <cofactor evidence="1">
        <name>iron-sulfur cluster</name>
        <dbReference type="ChEBI" id="CHEBI:30408"/>
    </cofactor>
    <text evidence="1">Binds 1 iron-sulfur cluster per subunit.</text>
</comment>
<comment type="subunit">
    <text evidence="1">Homodimer.</text>
</comment>
<comment type="similarity">
    <text evidence="1">Belongs to the HesB/IscA family.</text>
</comment>
<dbReference type="EMBL" id="CP000086">
    <property type="protein sequence ID" value="ABC36397.1"/>
    <property type="molecule type" value="Genomic_DNA"/>
</dbReference>
<dbReference type="RefSeq" id="WP_004194247.1">
    <property type="nucleotide sequence ID" value="NZ_CP008785.1"/>
</dbReference>
<dbReference type="SMR" id="Q2SZ67"/>
<dbReference type="GeneID" id="93061505"/>
<dbReference type="KEGG" id="bte:BTH_I1235"/>
<dbReference type="HOGENOM" id="CLU_069054_5_3_4"/>
<dbReference type="Proteomes" id="UP000001930">
    <property type="component" value="Chromosome I"/>
</dbReference>
<dbReference type="GO" id="GO:0051537">
    <property type="term" value="F:2 iron, 2 sulfur cluster binding"/>
    <property type="evidence" value="ECO:0007669"/>
    <property type="project" value="UniProtKB-ARBA"/>
</dbReference>
<dbReference type="GO" id="GO:0051539">
    <property type="term" value="F:4 iron, 4 sulfur cluster binding"/>
    <property type="evidence" value="ECO:0007669"/>
    <property type="project" value="TreeGrafter"/>
</dbReference>
<dbReference type="GO" id="GO:0005506">
    <property type="term" value="F:iron ion binding"/>
    <property type="evidence" value="ECO:0007669"/>
    <property type="project" value="UniProtKB-UniRule"/>
</dbReference>
<dbReference type="GO" id="GO:0016226">
    <property type="term" value="P:iron-sulfur cluster assembly"/>
    <property type="evidence" value="ECO:0007669"/>
    <property type="project" value="UniProtKB-UniRule"/>
</dbReference>
<dbReference type="FunFam" id="2.60.300.12:FF:000002">
    <property type="entry name" value="Iron-sulfur cluster insertion protein ErpA"/>
    <property type="match status" value="1"/>
</dbReference>
<dbReference type="Gene3D" id="2.60.300.12">
    <property type="entry name" value="HesB-like domain"/>
    <property type="match status" value="1"/>
</dbReference>
<dbReference type="HAMAP" id="MF_01380">
    <property type="entry name" value="Fe_S_insert_ErpA"/>
    <property type="match status" value="1"/>
</dbReference>
<dbReference type="InterPro" id="IPR000361">
    <property type="entry name" value="FeS_biogenesis"/>
</dbReference>
<dbReference type="InterPro" id="IPR016092">
    <property type="entry name" value="FeS_cluster_insertion"/>
</dbReference>
<dbReference type="InterPro" id="IPR017870">
    <property type="entry name" value="FeS_cluster_insertion_CS"/>
</dbReference>
<dbReference type="InterPro" id="IPR023063">
    <property type="entry name" value="FeS_cluster_insertion_RrpA"/>
</dbReference>
<dbReference type="InterPro" id="IPR035903">
    <property type="entry name" value="HesB-like_dom_sf"/>
</dbReference>
<dbReference type="NCBIfam" id="TIGR00049">
    <property type="entry name" value="iron-sulfur cluster assembly accessory protein"/>
    <property type="match status" value="1"/>
</dbReference>
<dbReference type="NCBIfam" id="NF010147">
    <property type="entry name" value="PRK13623.1"/>
    <property type="match status" value="1"/>
</dbReference>
<dbReference type="PANTHER" id="PTHR43011">
    <property type="entry name" value="IRON-SULFUR CLUSTER ASSEMBLY 2 HOMOLOG, MITOCHONDRIAL"/>
    <property type="match status" value="1"/>
</dbReference>
<dbReference type="PANTHER" id="PTHR43011:SF1">
    <property type="entry name" value="IRON-SULFUR CLUSTER ASSEMBLY 2 HOMOLOG, MITOCHONDRIAL"/>
    <property type="match status" value="1"/>
</dbReference>
<dbReference type="Pfam" id="PF01521">
    <property type="entry name" value="Fe-S_biosyn"/>
    <property type="match status" value="1"/>
</dbReference>
<dbReference type="SUPFAM" id="SSF89360">
    <property type="entry name" value="HesB-like domain"/>
    <property type="match status" value="1"/>
</dbReference>
<dbReference type="PROSITE" id="PS01152">
    <property type="entry name" value="HESB"/>
    <property type="match status" value="1"/>
</dbReference>
<organism>
    <name type="scientific">Burkholderia thailandensis (strain ATCC 700388 / DSM 13276 / CCUG 48851 / CIP 106301 / E264)</name>
    <dbReference type="NCBI Taxonomy" id="271848"/>
    <lineage>
        <taxon>Bacteria</taxon>
        <taxon>Pseudomonadati</taxon>
        <taxon>Pseudomonadota</taxon>
        <taxon>Betaproteobacteria</taxon>
        <taxon>Burkholderiales</taxon>
        <taxon>Burkholderiaceae</taxon>
        <taxon>Burkholderia</taxon>
        <taxon>pseudomallei group</taxon>
    </lineage>
</organism>
<gene>
    <name evidence="1" type="primary">erpA</name>
    <name type="ordered locus">BTH_I1235</name>
</gene>
<evidence type="ECO:0000255" key="1">
    <source>
        <dbReference type="HAMAP-Rule" id="MF_01380"/>
    </source>
</evidence>
<proteinExistence type="inferred from homology"/>
<keyword id="KW-0408">Iron</keyword>
<keyword id="KW-0411">Iron-sulfur</keyword>
<keyword id="KW-0479">Metal-binding</keyword>
<protein>
    <recommendedName>
        <fullName evidence="1">Putative iron-sulfur cluster insertion protein ErpA</fullName>
    </recommendedName>
</protein>
<accession>Q2SZ67</accession>
<feature type="chain" id="PRO_0000311466" description="Putative iron-sulfur cluster insertion protein ErpA">
    <location>
        <begin position="1"/>
        <end position="122"/>
    </location>
</feature>
<feature type="binding site" evidence="1">
    <location>
        <position position="50"/>
    </location>
    <ligand>
        <name>iron-sulfur cluster</name>
        <dbReference type="ChEBI" id="CHEBI:30408"/>
    </ligand>
</feature>
<feature type="binding site" evidence="1">
    <location>
        <position position="114"/>
    </location>
    <ligand>
        <name>iron-sulfur cluster</name>
        <dbReference type="ChEBI" id="CHEBI:30408"/>
    </ligand>
</feature>
<feature type="binding site" evidence="1">
    <location>
        <position position="116"/>
    </location>
    <ligand>
        <name>iron-sulfur cluster</name>
        <dbReference type="ChEBI" id="CHEBI:30408"/>
    </ligand>
</feature>
<name>ERPA_BURTA</name>
<sequence length="122" mass="13093">MNAVTESAATTEMPAPFVFTDAAADKVKQLIDEEGNPDLKLRVFVQGGGCSGFQYGFTFDEEVNEDDTVLNKNGVVLLVDAMSYQYLVGAEIDYKDDLNGAQFVIKNPNATTTCGCGSSFSV</sequence>